<gene>
    <name evidence="1" type="primary">dcd</name>
    <name type="ordered locus">Sputw3181_1792</name>
</gene>
<comment type="function">
    <text evidence="1">Catalyzes the deamination of dCTP to dUTP.</text>
</comment>
<comment type="catalytic activity">
    <reaction evidence="1">
        <text>dCTP + H2O + H(+) = dUTP + NH4(+)</text>
        <dbReference type="Rhea" id="RHEA:22680"/>
        <dbReference type="ChEBI" id="CHEBI:15377"/>
        <dbReference type="ChEBI" id="CHEBI:15378"/>
        <dbReference type="ChEBI" id="CHEBI:28938"/>
        <dbReference type="ChEBI" id="CHEBI:61481"/>
        <dbReference type="ChEBI" id="CHEBI:61555"/>
        <dbReference type="EC" id="3.5.4.13"/>
    </reaction>
</comment>
<comment type="pathway">
    <text evidence="1">Pyrimidine metabolism; dUMP biosynthesis; dUMP from dCTP (dUTP route): step 1/2.</text>
</comment>
<comment type="subunit">
    <text evidence="1">Homotrimer.</text>
</comment>
<comment type="similarity">
    <text evidence="1">Belongs to the dCTP deaminase family.</text>
</comment>
<name>DCD_SHESW</name>
<proteinExistence type="inferred from homology"/>
<evidence type="ECO:0000255" key="1">
    <source>
        <dbReference type="HAMAP-Rule" id="MF_00146"/>
    </source>
</evidence>
<evidence type="ECO:0000256" key="2">
    <source>
        <dbReference type="SAM" id="MobiDB-lite"/>
    </source>
</evidence>
<dbReference type="EC" id="3.5.4.13" evidence="1"/>
<dbReference type="EMBL" id="CP000503">
    <property type="protein sequence ID" value="ABM24628.1"/>
    <property type="molecule type" value="Genomic_DNA"/>
</dbReference>
<dbReference type="RefSeq" id="WP_011789124.1">
    <property type="nucleotide sequence ID" value="NC_008750.1"/>
</dbReference>
<dbReference type="SMR" id="A1RIY3"/>
<dbReference type="GeneID" id="67443751"/>
<dbReference type="KEGG" id="shw:Sputw3181_1792"/>
<dbReference type="HOGENOM" id="CLU_087476_2_0_6"/>
<dbReference type="UniPathway" id="UPA00610">
    <property type="reaction ID" value="UER00665"/>
</dbReference>
<dbReference type="Proteomes" id="UP000002597">
    <property type="component" value="Chromosome"/>
</dbReference>
<dbReference type="GO" id="GO:0008829">
    <property type="term" value="F:dCTP deaminase activity"/>
    <property type="evidence" value="ECO:0007669"/>
    <property type="project" value="UniProtKB-UniRule"/>
</dbReference>
<dbReference type="GO" id="GO:0000166">
    <property type="term" value="F:nucleotide binding"/>
    <property type="evidence" value="ECO:0007669"/>
    <property type="project" value="UniProtKB-KW"/>
</dbReference>
<dbReference type="GO" id="GO:0006226">
    <property type="term" value="P:dUMP biosynthetic process"/>
    <property type="evidence" value="ECO:0007669"/>
    <property type="project" value="UniProtKB-UniPathway"/>
</dbReference>
<dbReference type="GO" id="GO:0006229">
    <property type="term" value="P:dUTP biosynthetic process"/>
    <property type="evidence" value="ECO:0007669"/>
    <property type="project" value="UniProtKB-UniRule"/>
</dbReference>
<dbReference type="GO" id="GO:0015949">
    <property type="term" value="P:nucleobase-containing small molecule interconversion"/>
    <property type="evidence" value="ECO:0007669"/>
    <property type="project" value="TreeGrafter"/>
</dbReference>
<dbReference type="CDD" id="cd07557">
    <property type="entry name" value="trimeric_dUTPase"/>
    <property type="match status" value="1"/>
</dbReference>
<dbReference type="FunFam" id="2.70.40.10:FF:000003">
    <property type="entry name" value="dCTP deaminase"/>
    <property type="match status" value="1"/>
</dbReference>
<dbReference type="Gene3D" id="2.70.40.10">
    <property type="match status" value="1"/>
</dbReference>
<dbReference type="HAMAP" id="MF_00146">
    <property type="entry name" value="dCTP_deaminase"/>
    <property type="match status" value="1"/>
</dbReference>
<dbReference type="InterPro" id="IPR011962">
    <property type="entry name" value="dCTP_deaminase"/>
</dbReference>
<dbReference type="InterPro" id="IPR036157">
    <property type="entry name" value="dUTPase-like_sf"/>
</dbReference>
<dbReference type="InterPro" id="IPR033704">
    <property type="entry name" value="dUTPase_trimeric"/>
</dbReference>
<dbReference type="NCBIfam" id="TIGR02274">
    <property type="entry name" value="dCTP_deam"/>
    <property type="match status" value="1"/>
</dbReference>
<dbReference type="PANTHER" id="PTHR42680">
    <property type="entry name" value="DCTP DEAMINASE"/>
    <property type="match status" value="1"/>
</dbReference>
<dbReference type="PANTHER" id="PTHR42680:SF3">
    <property type="entry name" value="DCTP DEAMINASE"/>
    <property type="match status" value="1"/>
</dbReference>
<dbReference type="Pfam" id="PF22769">
    <property type="entry name" value="DCD"/>
    <property type="match status" value="1"/>
</dbReference>
<dbReference type="SUPFAM" id="SSF51283">
    <property type="entry name" value="dUTPase-like"/>
    <property type="match status" value="1"/>
</dbReference>
<sequence>MRLTDIEIEQALDNGTIVIEPRPSIDAISGVSVDVRLGGQFRVFKDHTAPFIDLSGPSGEMQAALDRVMSEIIEIPDGEAFFLHPGELALAVTYESVTLPADIVGWLDGRSSLARLGLMVHVTAHRIDPGWQGKIVLEFYNSGKLPLALRPRMTIGALNFERLSGPVARPYNTRKNAKYKDQQEAVASRISQD</sequence>
<keyword id="KW-0378">Hydrolase</keyword>
<keyword id="KW-0546">Nucleotide metabolism</keyword>
<keyword id="KW-0547">Nucleotide-binding</keyword>
<organism>
    <name type="scientific">Shewanella sp. (strain W3-18-1)</name>
    <dbReference type="NCBI Taxonomy" id="351745"/>
    <lineage>
        <taxon>Bacteria</taxon>
        <taxon>Pseudomonadati</taxon>
        <taxon>Pseudomonadota</taxon>
        <taxon>Gammaproteobacteria</taxon>
        <taxon>Alteromonadales</taxon>
        <taxon>Shewanellaceae</taxon>
        <taxon>Shewanella</taxon>
    </lineage>
</organism>
<reference key="1">
    <citation type="submission" date="2006-12" db="EMBL/GenBank/DDBJ databases">
        <title>Complete sequence of Shewanella sp. W3-18-1.</title>
        <authorList>
            <consortium name="US DOE Joint Genome Institute"/>
            <person name="Copeland A."/>
            <person name="Lucas S."/>
            <person name="Lapidus A."/>
            <person name="Barry K."/>
            <person name="Detter J.C."/>
            <person name="Glavina del Rio T."/>
            <person name="Hammon N."/>
            <person name="Israni S."/>
            <person name="Dalin E."/>
            <person name="Tice H."/>
            <person name="Pitluck S."/>
            <person name="Chain P."/>
            <person name="Malfatti S."/>
            <person name="Shin M."/>
            <person name="Vergez L."/>
            <person name="Schmutz J."/>
            <person name="Larimer F."/>
            <person name="Land M."/>
            <person name="Hauser L."/>
            <person name="Kyrpides N."/>
            <person name="Lykidis A."/>
            <person name="Tiedje J."/>
            <person name="Richardson P."/>
        </authorList>
    </citation>
    <scope>NUCLEOTIDE SEQUENCE [LARGE SCALE GENOMIC DNA]</scope>
    <source>
        <strain>W3-18-1</strain>
    </source>
</reference>
<accession>A1RIY3</accession>
<feature type="chain" id="PRO_1000009815" description="dCTP deaminase">
    <location>
        <begin position="1"/>
        <end position="193"/>
    </location>
</feature>
<feature type="region of interest" description="Disordered" evidence="2">
    <location>
        <begin position="174"/>
        <end position="193"/>
    </location>
</feature>
<feature type="active site" description="Proton donor/acceptor" evidence="1">
    <location>
        <position position="138"/>
    </location>
</feature>
<feature type="binding site" evidence="1">
    <location>
        <begin position="110"/>
        <end position="115"/>
    </location>
    <ligand>
        <name>dCTP</name>
        <dbReference type="ChEBI" id="CHEBI:61481"/>
    </ligand>
</feature>
<feature type="binding site" evidence="1">
    <location>
        <position position="128"/>
    </location>
    <ligand>
        <name>dCTP</name>
        <dbReference type="ChEBI" id="CHEBI:61481"/>
    </ligand>
</feature>
<feature type="binding site" evidence="1">
    <location>
        <begin position="136"/>
        <end position="138"/>
    </location>
    <ligand>
        <name>dCTP</name>
        <dbReference type="ChEBI" id="CHEBI:61481"/>
    </ligand>
</feature>
<feature type="binding site" evidence="1">
    <location>
        <position position="171"/>
    </location>
    <ligand>
        <name>dCTP</name>
        <dbReference type="ChEBI" id="CHEBI:61481"/>
    </ligand>
</feature>
<feature type="binding site" evidence="1">
    <location>
        <position position="178"/>
    </location>
    <ligand>
        <name>dCTP</name>
        <dbReference type="ChEBI" id="CHEBI:61481"/>
    </ligand>
</feature>
<feature type="binding site" evidence="1">
    <location>
        <position position="182"/>
    </location>
    <ligand>
        <name>dCTP</name>
        <dbReference type="ChEBI" id="CHEBI:61481"/>
    </ligand>
</feature>
<protein>
    <recommendedName>
        <fullName evidence="1">dCTP deaminase</fullName>
        <ecNumber evidence="1">3.5.4.13</ecNumber>
    </recommendedName>
    <alternativeName>
        <fullName evidence="1">Deoxycytidine triphosphate deaminase</fullName>
    </alternativeName>
</protein>